<gene>
    <name type="primary">bap1</name>
    <name type="ORF">TEgg031c22.1</name>
</gene>
<proteinExistence type="evidence at transcript level"/>
<sequence length="685" mass="76399">MNKGWLELESDPGLFTLLVEDFGVKGVQVEEIYDLQSKCPGPVYGFIFLFKWIEERRSRRKVSTLLDDTSVMEDEVVNNMFFAHQLIPNSCATHALLSVLLNCSGVHLGPTLSRIKEFTKGFSPESKGYAIGNAPELAKAHNSHARPEPRHLPEKQNGISAVRTMEAFHFVSYVPIKGRLFELDGLKVYPIDHGPWAEDEEWTDKARRVIMERIGLATAGEPYHDIRFNLMAVVPDRRLKYESKLHILKMNRQTVLEALQQLIRVTQPELIQAQKPTEGQSTEETKSAALKAPVSQESHRAHHGSHRNATDVGAEPPGALIRGPVMSAYSKPNSLAQNGGTVAAPASRLPAFLDNHNYAKSPMQEEEDLAAGVGRSRGVPPPAPDTDEEEEEETENVRRPLTPPGFKRRSSEPLPPPPGPEPGVLAEKLKETQRDLCSPLSIKTGAPTAPHSQPSPTPSNESTDTASEIGSAFNSPLRSPLRSANPTRPSSPVTLHLSKVLFGEEEPLLRLDCVRYNRAVRELGPHISTGILHLSKDGYLCPLSRLETGKVSPKGNKVEEPRESSEPDTERSRVTEVPQGEKFSPKELLALLKCVEAEISSSEACLREELEKRKKFKIDDQRRTHNYDEFICAFISMLAQEGMLASLVEQNISVRRRQGVSIGRLHKQRKPDRRKRSRPYKAKRQ</sequence>
<feature type="chain" id="PRO_0000395821" description="Ubiquitin carboxyl-terminal hydrolase BAP1">
    <location>
        <begin position="1"/>
        <end position="685"/>
    </location>
</feature>
<feature type="domain" description="UCH catalytic" evidence="2">
    <location>
        <begin position="4"/>
        <end position="235"/>
    </location>
</feature>
<feature type="domain" description="ULD" evidence="3">
    <location>
        <begin position="626"/>
        <end position="654"/>
    </location>
</feature>
<feature type="region of interest" description="Disordered" evidence="4">
    <location>
        <begin position="273"/>
        <end position="325"/>
    </location>
</feature>
<feature type="region of interest" description="Disordered" evidence="4">
    <location>
        <begin position="363"/>
        <end position="425"/>
    </location>
</feature>
<feature type="region of interest" description="Disordered" evidence="4">
    <location>
        <begin position="440"/>
        <end position="493"/>
    </location>
</feature>
<feature type="region of interest" description="Disordered" evidence="4">
    <location>
        <begin position="550"/>
        <end position="579"/>
    </location>
</feature>
<feature type="region of interest" description="Disordered" evidence="4">
    <location>
        <begin position="659"/>
        <end position="685"/>
    </location>
</feature>
<feature type="short sequence motif" description="Nuclear localization signal" evidence="1">
    <location>
        <begin position="673"/>
        <end position="678"/>
    </location>
</feature>
<feature type="compositionally biased region" description="Acidic residues" evidence="4">
    <location>
        <begin position="385"/>
        <end position="394"/>
    </location>
</feature>
<feature type="compositionally biased region" description="Polar residues" evidence="4">
    <location>
        <begin position="450"/>
        <end position="493"/>
    </location>
</feature>
<feature type="compositionally biased region" description="Basic and acidic residues" evidence="4">
    <location>
        <begin position="556"/>
        <end position="574"/>
    </location>
</feature>
<feature type="active site" description="Nucleophile" evidence="2">
    <location>
        <position position="91"/>
    </location>
</feature>
<feature type="active site" description="Proton donor" evidence="2">
    <location>
        <position position="169"/>
    </location>
</feature>
<feature type="site" description="Transition state stabilizer" evidence="2">
    <location>
        <position position="85"/>
    </location>
</feature>
<feature type="site" description="Important for enzyme activity" evidence="2">
    <location>
        <position position="184"/>
    </location>
</feature>
<feature type="sequence conflict" description="In Ref. 1; CAJ81966." evidence="5" ref="1">
    <original>N</original>
    <variation>S</variation>
    <location>
        <position position="308"/>
    </location>
</feature>
<keyword id="KW-0156">Chromatin regulator</keyword>
<keyword id="KW-0963">Cytoplasm</keyword>
<keyword id="KW-0378">Hydrolase</keyword>
<keyword id="KW-0539">Nucleus</keyword>
<keyword id="KW-0645">Protease</keyword>
<keyword id="KW-1185">Reference proteome</keyword>
<keyword id="KW-0788">Thiol protease</keyword>
<keyword id="KW-0833">Ubl conjugation pathway</keyword>
<dbReference type="EC" id="3.4.19.12" evidence="1"/>
<dbReference type="EMBL" id="CR848566">
    <property type="protein sequence ID" value="CAJ81966.1"/>
    <property type="molecule type" value="mRNA"/>
</dbReference>
<dbReference type="EMBL" id="BC080985">
    <property type="protein sequence ID" value="AAH80985.1"/>
    <property type="molecule type" value="mRNA"/>
</dbReference>
<dbReference type="RefSeq" id="NP_001008206.1">
    <property type="nucleotide sequence ID" value="NM_001008205.1"/>
</dbReference>
<dbReference type="SMR" id="Q66JB6"/>
<dbReference type="FunCoup" id="Q66JB6">
    <property type="interactions" value="3279"/>
</dbReference>
<dbReference type="STRING" id="8364.ENSXETP00000015437"/>
<dbReference type="MEROPS" id="C12.004"/>
<dbReference type="PaxDb" id="8364-ENSXETP00000000167"/>
<dbReference type="DNASU" id="493568"/>
<dbReference type="GeneID" id="493568"/>
<dbReference type="KEGG" id="xtr:493568"/>
<dbReference type="AGR" id="Xenbase:XB-GENE-494978"/>
<dbReference type="CTD" id="8314"/>
<dbReference type="Xenbase" id="XB-GENE-494978">
    <property type="gene designation" value="bap1"/>
</dbReference>
<dbReference type="eggNOG" id="KOG2778">
    <property type="taxonomic scope" value="Eukaryota"/>
</dbReference>
<dbReference type="InParanoid" id="Q66JB6"/>
<dbReference type="OMA" id="RIAYEQK"/>
<dbReference type="OrthoDB" id="1924260at2759"/>
<dbReference type="Reactome" id="R-XTR-5689603">
    <property type="pathway name" value="UCH proteinases"/>
</dbReference>
<dbReference type="Proteomes" id="UP000008143">
    <property type="component" value="Chromosome 4"/>
</dbReference>
<dbReference type="GO" id="GO:0005737">
    <property type="term" value="C:cytoplasm"/>
    <property type="evidence" value="ECO:0000250"/>
    <property type="project" value="UniProtKB"/>
</dbReference>
<dbReference type="GO" id="GO:0005634">
    <property type="term" value="C:nucleus"/>
    <property type="evidence" value="ECO:0000250"/>
    <property type="project" value="UniProtKB"/>
</dbReference>
<dbReference type="GO" id="GO:0035517">
    <property type="term" value="C:PR-DUB complex"/>
    <property type="evidence" value="ECO:0000250"/>
    <property type="project" value="UniProtKB"/>
</dbReference>
<dbReference type="GO" id="GO:0003682">
    <property type="term" value="F:chromatin binding"/>
    <property type="evidence" value="ECO:0000250"/>
    <property type="project" value="UniProtKB"/>
</dbReference>
<dbReference type="GO" id="GO:0004843">
    <property type="term" value="F:cysteine-type deubiquitinase activity"/>
    <property type="evidence" value="ECO:0000250"/>
    <property type="project" value="UniProtKB"/>
</dbReference>
<dbReference type="GO" id="GO:0006325">
    <property type="term" value="P:chromatin organization"/>
    <property type="evidence" value="ECO:0007669"/>
    <property type="project" value="UniProtKB-KW"/>
</dbReference>
<dbReference type="GO" id="GO:0045892">
    <property type="term" value="P:negative regulation of DNA-templated transcription"/>
    <property type="evidence" value="ECO:0000250"/>
    <property type="project" value="UniProtKB"/>
</dbReference>
<dbReference type="GO" id="GO:0016579">
    <property type="term" value="P:protein deubiquitination"/>
    <property type="evidence" value="ECO:0000250"/>
    <property type="project" value="UniProtKB"/>
</dbReference>
<dbReference type="GO" id="GO:0071108">
    <property type="term" value="P:protein K48-linked deubiquitination"/>
    <property type="evidence" value="ECO:0000250"/>
    <property type="project" value="UniProtKB"/>
</dbReference>
<dbReference type="GO" id="GO:0051726">
    <property type="term" value="P:regulation of cell cycle"/>
    <property type="evidence" value="ECO:0000250"/>
    <property type="project" value="UniProtKB"/>
</dbReference>
<dbReference type="GO" id="GO:0001558">
    <property type="term" value="P:regulation of cell growth"/>
    <property type="evidence" value="ECO:0000250"/>
    <property type="project" value="UniProtKB"/>
</dbReference>
<dbReference type="GO" id="GO:0006511">
    <property type="term" value="P:ubiquitin-dependent protein catabolic process"/>
    <property type="evidence" value="ECO:0007669"/>
    <property type="project" value="InterPro"/>
</dbReference>
<dbReference type="CDD" id="cd09617">
    <property type="entry name" value="Peptidase_C12_UCH37_BAP1"/>
    <property type="match status" value="1"/>
</dbReference>
<dbReference type="FunFam" id="3.40.532.10:FF:000002">
    <property type="entry name" value="Ubiquitin carboxyl-terminal hydrolase"/>
    <property type="match status" value="1"/>
</dbReference>
<dbReference type="FunFam" id="1.20.58.860:FF:000010">
    <property type="entry name" value="Ubiquitin carboxyl-terminal hydrolase BAP1"/>
    <property type="match status" value="1"/>
</dbReference>
<dbReference type="Gene3D" id="1.20.58.860">
    <property type="match status" value="1"/>
</dbReference>
<dbReference type="Gene3D" id="3.40.532.10">
    <property type="entry name" value="Peptidase C12, ubiquitin carboxyl-terminal hydrolase"/>
    <property type="match status" value="1"/>
</dbReference>
<dbReference type="InterPro" id="IPR038765">
    <property type="entry name" value="Papain-like_cys_pep_sf"/>
</dbReference>
<dbReference type="InterPro" id="IPR001578">
    <property type="entry name" value="Peptidase_C12_UCH"/>
</dbReference>
<dbReference type="InterPro" id="IPR036959">
    <property type="entry name" value="Peptidase_C12_UCH_sf"/>
</dbReference>
<dbReference type="InterPro" id="IPR041507">
    <property type="entry name" value="UCH_C"/>
</dbReference>
<dbReference type="PANTHER" id="PTHR10589">
    <property type="entry name" value="UBIQUITIN CARBOXYL-TERMINAL HYDROLASE"/>
    <property type="match status" value="1"/>
</dbReference>
<dbReference type="PANTHER" id="PTHR10589:SF28">
    <property type="entry name" value="UBIQUITIN CARBOXYL-TERMINAL HYDROLASE BAP1"/>
    <property type="match status" value="1"/>
</dbReference>
<dbReference type="Pfam" id="PF01088">
    <property type="entry name" value="Peptidase_C12"/>
    <property type="match status" value="1"/>
</dbReference>
<dbReference type="Pfam" id="PF18031">
    <property type="entry name" value="UCH_C"/>
    <property type="match status" value="1"/>
</dbReference>
<dbReference type="PRINTS" id="PR00707">
    <property type="entry name" value="UBCTHYDRLASE"/>
</dbReference>
<dbReference type="SUPFAM" id="SSF54001">
    <property type="entry name" value="Cysteine proteinases"/>
    <property type="match status" value="1"/>
</dbReference>
<dbReference type="PROSITE" id="PS52048">
    <property type="entry name" value="UCH_DOMAIN"/>
    <property type="match status" value="1"/>
</dbReference>
<dbReference type="PROSITE" id="PS52049">
    <property type="entry name" value="ULD"/>
    <property type="match status" value="1"/>
</dbReference>
<protein>
    <recommendedName>
        <fullName>Ubiquitin carboxyl-terminal hydrolase BAP1</fullName>
        <ecNumber evidence="1">3.4.19.12</ecNumber>
    </recommendedName>
    <alternativeName>
        <fullName>BRCA1-associated protein 1</fullName>
    </alternativeName>
</protein>
<reference key="1">
    <citation type="submission" date="2006-10" db="EMBL/GenBank/DDBJ databases">
        <authorList>
            <consortium name="Sanger Xenopus tropicalis EST/cDNA project"/>
        </authorList>
    </citation>
    <scope>NUCLEOTIDE SEQUENCE [LARGE SCALE MRNA]</scope>
    <source>
        <tissue>Egg</tissue>
    </source>
</reference>
<reference key="2">
    <citation type="submission" date="2004-08" db="EMBL/GenBank/DDBJ databases">
        <authorList>
            <consortium name="NIH - Xenopus Gene Collection (XGC) project"/>
        </authorList>
    </citation>
    <scope>NUCLEOTIDE SEQUENCE [LARGE SCALE MRNA]</scope>
    <source>
        <tissue>Embryo</tissue>
    </source>
</reference>
<name>BAP1_XENTR</name>
<comment type="function">
    <text evidence="1">Deubiquitinating enzyme that plays a key role in chromatin by mediating deubiquitination of histone H2A. Catalytic component of the PR-DUB complex, a complex that specifically mediates deubiquitination of histone H2A monoubiquitinated at 'Lys-119' (H2AK119ub1) (By similarity).</text>
</comment>
<comment type="catalytic activity">
    <reaction evidence="1">
        <text>Thiol-dependent hydrolysis of ester, thioester, amide, peptide and isopeptide bonds formed by the C-terminal Gly of ubiquitin (a 76-residue protein attached to proteins as an intracellular targeting signal).</text>
        <dbReference type="EC" id="3.4.19.12"/>
    </reaction>
</comment>
<comment type="subunit">
    <text evidence="1">Component of the PR-DUB complex.</text>
</comment>
<comment type="subcellular location">
    <subcellularLocation>
        <location evidence="1">Cytoplasm</location>
    </subcellularLocation>
    <subcellularLocation>
        <location evidence="1">Nucleus</location>
    </subcellularLocation>
    <text evidence="1">Mainly nuclear. Binds to chromatin.</text>
</comment>
<comment type="similarity">
    <text evidence="5">Belongs to the peptidase C12 family. BAP1 subfamily.</text>
</comment>
<evidence type="ECO:0000250" key="1">
    <source>
        <dbReference type="UniProtKB" id="Q92560"/>
    </source>
</evidence>
<evidence type="ECO:0000255" key="2">
    <source>
        <dbReference type="PROSITE-ProRule" id="PRU01393"/>
    </source>
</evidence>
<evidence type="ECO:0000255" key="3">
    <source>
        <dbReference type="PROSITE-ProRule" id="PRU01394"/>
    </source>
</evidence>
<evidence type="ECO:0000256" key="4">
    <source>
        <dbReference type="SAM" id="MobiDB-lite"/>
    </source>
</evidence>
<evidence type="ECO:0000305" key="5"/>
<organism>
    <name type="scientific">Xenopus tropicalis</name>
    <name type="common">Western clawed frog</name>
    <name type="synonym">Silurana tropicalis</name>
    <dbReference type="NCBI Taxonomy" id="8364"/>
    <lineage>
        <taxon>Eukaryota</taxon>
        <taxon>Metazoa</taxon>
        <taxon>Chordata</taxon>
        <taxon>Craniata</taxon>
        <taxon>Vertebrata</taxon>
        <taxon>Euteleostomi</taxon>
        <taxon>Amphibia</taxon>
        <taxon>Batrachia</taxon>
        <taxon>Anura</taxon>
        <taxon>Pipoidea</taxon>
        <taxon>Pipidae</taxon>
        <taxon>Xenopodinae</taxon>
        <taxon>Xenopus</taxon>
        <taxon>Silurana</taxon>
    </lineage>
</organism>
<accession>Q66JB6</accession>
<accession>Q28DW6</accession>